<accession>Q9PTP1</accession>
<accession>Q7ZW84</accession>
<reference key="1">
    <citation type="journal article" date="1999" name="Fish. Sci.">
        <title>Zebrafish Danio rerio proliferating cell nuclear antigen (PCNA): cloning and characterization.</title>
        <authorList>
            <person name="Lee J.-S."/>
            <person name="Gye M.C."/>
        </authorList>
    </citation>
    <scope>NUCLEOTIDE SEQUENCE [MRNA]</scope>
</reference>
<reference key="2">
    <citation type="submission" date="2003-12" db="EMBL/GenBank/DDBJ databases">
        <authorList>
            <consortium name="NIH - Zebrafish Gene Collection (ZGC) project"/>
        </authorList>
    </citation>
    <scope>NUCLEOTIDE SEQUENCE [LARGE SCALE MRNA]</scope>
</reference>
<reference key="3">
    <citation type="journal article" date="2008" name="J. Proteome Res.">
        <title>Online automated in vivo zebrafish phosphoproteomics: from large-scale analysis down to a single embryo.</title>
        <authorList>
            <person name="Lemeer S."/>
            <person name="Pinkse M.W.H."/>
            <person name="Mohammed S."/>
            <person name="van Breukelen B."/>
            <person name="den Hertog J."/>
            <person name="Slijper M."/>
            <person name="Heck A.J.R."/>
        </authorList>
    </citation>
    <scope>PHOSPHORYLATION [LARGE SCALE ANALYSIS] AT SER-259 AND SER-260</scope>
    <scope>IDENTIFICATION BY MASS SPECTROMETRY</scope>
    <source>
        <tissue>Embryo</tissue>
    </source>
</reference>
<evidence type="ECO:0000250" key="1"/>
<evidence type="ECO:0000250" key="2">
    <source>
        <dbReference type="UniProtKB" id="P12004"/>
    </source>
</evidence>
<evidence type="ECO:0000255" key="3"/>
<evidence type="ECO:0000269" key="4">
    <source>
    </source>
</evidence>
<evidence type="ECO:0000305" key="5"/>
<keyword id="KW-0235">DNA replication</keyword>
<keyword id="KW-0238">DNA-binding</keyword>
<keyword id="KW-1017">Isopeptide bond</keyword>
<keyword id="KW-0539">Nucleus</keyword>
<keyword id="KW-0597">Phosphoprotein</keyword>
<keyword id="KW-1185">Reference proteome</keyword>
<keyword id="KW-0832">Ubl conjugation</keyword>
<dbReference type="EMBL" id="AF140608">
    <property type="protein sequence ID" value="AAF18324.1"/>
    <property type="molecule type" value="mRNA"/>
</dbReference>
<dbReference type="EMBL" id="BC049535">
    <property type="protein sequence ID" value="AAH49535.1"/>
    <property type="molecule type" value="mRNA"/>
</dbReference>
<dbReference type="EMBL" id="BC064299">
    <property type="protein sequence ID" value="AAH64299.1"/>
    <property type="molecule type" value="mRNA"/>
</dbReference>
<dbReference type="RefSeq" id="NP_571479.2">
    <property type="nucleotide sequence ID" value="NM_131404.2"/>
</dbReference>
<dbReference type="SMR" id="Q9PTP1"/>
<dbReference type="FunCoup" id="Q9PTP1">
    <property type="interactions" value="2673"/>
</dbReference>
<dbReference type="STRING" id="7955.ENSDARP00000070780"/>
<dbReference type="iPTMnet" id="Q9PTP1"/>
<dbReference type="PaxDb" id="7955-ENSDARP00000070780"/>
<dbReference type="Ensembl" id="ENSDART00000076304">
    <property type="protein sequence ID" value="ENSDARP00000070780"/>
    <property type="gene ID" value="ENSDARG00000054155"/>
</dbReference>
<dbReference type="GeneID" id="30678"/>
<dbReference type="KEGG" id="dre:30678"/>
<dbReference type="AGR" id="ZFIN:ZDB-GENE-000210-8"/>
<dbReference type="CTD" id="5111"/>
<dbReference type="ZFIN" id="ZDB-GENE-000210-8">
    <property type="gene designation" value="pcna"/>
</dbReference>
<dbReference type="eggNOG" id="KOG1636">
    <property type="taxonomic scope" value="Eukaryota"/>
</dbReference>
<dbReference type="HOGENOM" id="CLU_043978_3_0_1"/>
<dbReference type="InParanoid" id="Q9PTP1"/>
<dbReference type="OMA" id="EMKLINM"/>
<dbReference type="OrthoDB" id="534348at2759"/>
<dbReference type="PhylomeDB" id="Q9PTP1"/>
<dbReference type="TreeFam" id="TF313441"/>
<dbReference type="Reactome" id="R-DRE-110312">
    <property type="pathway name" value="Translesion synthesis by REV1"/>
</dbReference>
<dbReference type="Reactome" id="R-DRE-110314">
    <property type="pathway name" value="Recognition of DNA damage by PCNA-containing replication complex"/>
</dbReference>
<dbReference type="Reactome" id="R-DRE-110320">
    <property type="pathway name" value="Translesion Synthesis by POLH"/>
</dbReference>
<dbReference type="Reactome" id="R-DRE-4615885">
    <property type="pathway name" value="SUMOylation of DNA replication proteins"/>
</dbReference>
<dbReference type="Reactome" id="R-DRE-5358565">
    <property type="pathway name" value="Mismatch repair (MMR) directed by MSH2:MSH6 (MutSalpha)"/>
</dbReference>
<dbReference type="Reactome" id="R-DRE-5656121">
    <property type="pathway name" value="Translesion synthesis by POLI"/>
</dbReference>
<dbReference type="Reactome" id="R-DRE-5656169">
    <property type="pathway name" value="Termination of translesion DNA synthesis"/>
</dbReference>
<dbReference type="Reactome" id="R-DRE-6804114">
    <property type="pathway name" value="TP53 Regulates Transcription of Genes Involved in G2 Cell Cycle Arrest"/>
</dbReference>
<dbReference type="PRO" id="PR:Q9PTP1"/>
<dbReference type="Proteomes" id="UP000000437">
    <property type="component" value="Chromosome 10"/>
</dbReference>
<dbReference type="Bgee" id="ENSDARG00000054155">
    <property type="expression patterns" value="Expressed in blastula and 68 other cell types or tissues"/>
</dbReference>
<dbReference type="GO" id="GO:0005634">
    <property type="term" value="C:nucleus"/>
    <property type="evidence" value="ECO:0000314"/>
    <property type="project" value="ZFIN"/>
</dbReference>
<dbReference type="GO" id="GO:0043626">
    <property type="term" value="C:PCNA complex"/>
    <property type="evidence" value="ECO:0000318"/>
    <property type="project" value="GO_Central"/>
</dbReference>
<dbReference type="GO" id="GO:0070557">
    <property type="term" value="C:PCNA-p21 complex"/>
    <property type="evidence" value="ECO:0000250"/>
    <property type="project" value="UniProtKB"/>
</dbReference>
<dbReference type="GO" id="GO:0003677">
    <property type="term" value="F:DNA binding"/>
    <property type="evidence" value="ECO:0007669"/>
    <property type="project" value="UniProtKB-KW"/>
</dbReference>
<dbReference type="GO" id="GO:0030337">
    <property type="term" value="F:DNA polymerase processivity factor activity"/>
    <property type="evidence" value="ECO:0000318"/>
    <property type="project" value="GO_Central"/>
</dbReference>
<dbReference type="GO" id="GO:0006272">
    <property type="term" value="P:leading strand elongation"/>
    <property type="evidence" value="ECO:0000318"/>
    <property type="project" value="GO_Central"/>
</dbReference>
<dbReference type="GO" id="GO:0006298">
    <property type="term" value="P:mismatch repair"/>
    <property type="evidence" value="ECO:0000318"/>
    <property type="project" value="GO_Central"/>
</dbReference>
<dbReference type="GO" id="GO:0006275">
    <property type="term" value="P:regulation of DNA replication"/>
    <property type="evidence" value="ECO:0007669"/>
    <property type="project" value="InterPro"/>
</dbReference>
<dbReference type="GO" id="GO:0014823">
    <property type="term" value="P:response to activity"/>
    <property type="evidence" value="ECO:0000314"/>
    <property type="project" value="ZFIN"/>
</dbReference>
<dbReference type="GO" id="GO:0009617">
    <property type="term" value="P:response to bacterium"/>
    <property type="evidence" value="ECO:0000314"/>
    <property type="project" value="ZFIN"/>
</dbReference>
<dbReference type="GO" id="GO:0019985">
    <property type="term" value="P:translesion synthesis"/>
    <property type="evidence" value="ECO:0000250"/>
    <property type="project" value="UniProtKB"/>
</dbReference>
<dbReference type="CDD" id="cd00577">
    <property type="entry name" value="PCNA"/>
    <property type="match status" value="1"/>
</dbReference>
<dbReference type="FunFam" id="3.10.150.10:FF:000006">
    <property type="entry name" value="Proliferating cell nuclear antigen"/>
    <property type="match status" value="1"/>
</dbReference>
<dbReference type="FunFam" id="3.10.150.10:FF:000008">
    <property type="entry name" value="Proliferating cell nuclear antigen"/>
    <property type="match status" value="1"/>
</dbReference>
<dbReference type="Gene3D" id="3.10.150.10">
    <property type="entry name" value="DNA Polymerase III, subunit A, domain 2"/>
    <property type="match status" value="2"/>
</dbReference>
<dbReference type="HAMAP" id="MF_00317">
    <property type="entry name" value="DNApol_clamp_arch"/>
    <property type="match status" value="1"/>
</dbReference>
<dbReference type="InterPro" id="IPR046938">
    <property type="entry name" value="DNA_clamp_sf"/>
</dbReference>
<dbReference type="InterPro" id="IPR000730">
    <property type="entry name" value="Pr_cel_nuc_antig"/>
</dbReference>
<dbReference type="InterPro" id="IPR022649">
    <property type="entry name" value="Pr_cel_nuc_antig_C"/>
</dbReference>
<dbReference type="InterPro" id="IPR022659">
    <property type="entry name" value="Pr_cel_nuc_antig_CS"/>
</dbReference>
<dbReference type="InterPro" id="IPR022648">
    <property type="entry name" value="Pr_cel_nuc_antig_N"/>
</dbReference>
<dbReference type="NCBIfam" id="TIGR00590">
    <property type="entry name" value="pcna"/>
    <property type="match status" value="1"/>
</dbReference>
<dbReference type="PANTHER" id="PTHR11352">
    <property type="entry name" value="PROLIFERATING CELL NUCLEAR ANTIGEN"/>
    <property type="match status" value="1"/>
</dbReference>
<dbReference type="PANTHER" id="PTHR11352:SF0">
    <property type="entry name" value="PROLIFERATING CELL NUCLEAR ANTIGEN"/>
    <property type="match status" value="1"/>
</dbReference>
<dbReference type="Pfam" id="PF02747">
    <property type="entry name" value="PCNA_C"/>
    <property type="match status" value="1"/>
</dbReference>
<dbReference type="Pfam" id="PF00705">
    <property type="entry name" value="PCNA_N"/>
    <property type="match status" value="1"/>
</dbReference>
<dbReference type="PRINTS" id="PR00339">
    <property type="entry name" value="PCNACYCLIN"/>
</dbReference>
<dbReference type="SUPFAM" id="SSF55979">
    <property type="entry name" value="DNA clamp"/>
    <property type="match status" value="2"/>
</dbReference>
<dbReference type="PROSITE" id="PS01251">
    <property type="entry name" value="PCNA_1"/>
    <property type="match status" value="1"/>
</dbReference>
<dbReference type="PROSITE" id="PS00293">
    <property type="entry name" value="PCNA_2"/>
    <property type="match status" value="1"/>
</dbReference>
<proteinExistence type="evidence at protein level"/>
<gene>
    <name type="primary">pcna</name>
</gene>
<name>PCNA_DANRE</name>
<sequence length="260" mass="28611">MFEARLVQGSILKKVLEALKDLITEACWDVSSSGISLQSMDSSHVSLVQLTLRSDGFDSYRCDRNLAMGVNLSSMSKILKCAGNEDIITLRAEDNADALALVFETLNQEKVSDYEMKLMDLDVEQLGIPEQEYSCVVKMPSGEFARICRDLSQIGDAVMISCAKDGVKFSASGELGTGNIKLSQTSNVDKEDEAVTIEMNEPVQLIFALNYLNFFTKATPLSKTVTLSMSADIPLVVEYKIADMGHVKYYLAPKIDEESS</sequence>
<protein>
    <recommendedName>
        <fullName>Proliferating cell nuclear antigen</fullName>
        <shortName>PCNA</shortName>
    </recommendedName>
</protein>
<comment type="function">
    <text evidence="1">This protein is an auxiliary protein of DNA polymerase delta and is involved in the control of eukaryotic DNA replication by increasing the polymerase's processibility during elongation of the leading strand.</text>
</comment>
<comment type="subunit">
    <text evidence="1 2">Homotrimer. Forms a complex with activator 1 heteropentamer in the presence of ATP (By similarity). Component of the replisome complex (By similarity).</text>
</comment>
<comment type="subcellular location">
    <subcellularLocation>
        <location evidence="2">Nucleus</location>
    </subcellularLocation>
</comment>
<comment type="PTM">
    <text evidence="1">Monoubiquitinated by the ube2b-rad18 complex on Lys-164. Monoubiquitination at Lys-164 also takes place in undamaged proliferating cells, and is mediated by the dcx(dtl) complex, leading to enhance PCNA-dependent translesion DNA synthesis (By similarity).</text>
</comment>
<comment type="similarity">
    <text evidence="5">Belongs to the PCNA family.</text>
</comment>
<feature type="chain" id="PRO_0000149165" description="Proliferating cell nuclear antigen">
    <location>
        <begin position="1"/>
        <end position="260"/>
    </location>
</feature>
<feature type="DNA-binding region" evidence="3">
    <location>
        <begin position="61"/>
        <end position="80"/>
    </location>
</feature>
<feature type="modified residue" description="Phosphoserine" evidence="4">
    <location>
        <position position="259"/>
    </location>
</feature>
<feature type="modified residue" description="Phosphoserine" evidence="4">
    <location>
        <position position="260"/>
    </location>
</feature>
<feature type="cross-link" description="Glycyl lysine isopeptide (Lys-Gly) (interchain with G-Cter in ubiquitin)" evidence="1">
    <location>
        <position position="164"/>
    </location>
</feature>
<feature type="sequence conflict" description="In Ref. 1; AAF18324." evidence="5" ref="1">
    <original>I</original>
    <variation>Q</variation>
    <location>
        <position position="88"/>
    </location>
</feature>
<feature type="sequence conflict" description="In Ref. 1; AAF18324." evidence="5" ref="1">
    <original>A</original>
    <variation>T</variation>
    <location>
        <position position="98"/>
    </location>
</feature>
<feature type="sequence conflict" description="In Ref. 1; AAF18324." evidence="5" ref="1">
    <original>TL</original>
    <variation>AQ</variation>
    <location>
        <begin position="105"/>
        <end position="106"/>
    </location>
</feature>
<feature type="sequence conflict" description="In Ref. 1; AAF18324." evidence="5" ref="1">
    <original>A</original>
    <variation>P</variation>
    <location>
        <position position="218"/>
    </location>
</feature>
<feature type="sequence conflict" description="In Ref. 1; AAF18324." evidence="5" ref="1">
    <original>K</original>
    <variation>R</variation>
    <location>
        <position position="223"/>
    </location>
</feature>
<feature type="sequence conflict" description="In Ref. 1; AAF18324." evidence="5" ref="1">
    <original>S</original>
    <variation>R</variation>
    <location>
        <position position="228"/>
    </location>
</feature>
<feature type="sequence conflict" description="In Ref. 1; AAF18324." evidence="5" ref="1">
    <original>D</original>
    <variation>H</variation>
    <location>
        <position position="232"/>
    </location>
</feature>
<feature type="sequence conflict" description="In Ref. 1; AAF18324." evidence="5" ref="1">
    <original>Y</original>
    <variation>D</variation>
    <location>
        <position position="239"/>
    </location>
</feature>
<feature type="sequence conflict" description="In Ref. 1; AAF18324." evidence="5" ref="1">
    <original>MG</original>
    <variation>LE</variation>
    <location>
        <begin position="244"/>
        <end position="245"/>
    </location>
</feature>
<feature type="sequence conflict" description="In Ref. 1; AAF18324." evidence="5" ref="1">
    <original>KI</original>
    <variation>QIE</variation>
    <location>
        <begin position="254"/>
        <end position="255"/>
    </location>
</feature>
<organism>
    <name type="scientific">Danio rerio</name>
    <name type="common">Zebrafish</name>
    <name type="synonym">Brachydanio rerio</name>
    <dbReference type="NCBI Taxonomy" id="7955"/>
    <lineage>
        <taxon>Eukaryota</taxon>
        <taxon>Metazoa</taxon>
        <taxon>Chordata</taxon>
        <taxon>Craniata</taxon>
        <taxon>Vertebrata</taxon>
        <taxon>Euteleostomi</taxon>
        <taxon>Actinopterygii</taxon>
        <taxon>Neopterygii</taxon>
        <taxon>Teleostei</taxon>
        <taxon>Ostariophysi</taxon>
        <taxon>Cypriniformes</taxon>
        <taxon>Danionidae</taxon>
        <taxon>Danioninae</taxon>
        <taxon>Danio</taxon>
    </lineage>
</organism>